<comment type="function">
    <text evidence="1">Specifically methylates the N4 position of cytidine in position 1402 (C1402) of 16S rRNA.</text>
</comment>
<comment type="catalytic activity">
    <reaction evidence="1">
        <text>cytidine(1402) in 16S rRNA + S-adenosyl-L-methionine = N(4)-methylcytidine(1402) in 16S rRNA + S-adenosyl-L-homocysteine + H(+)</text>
        <dbReference type="Rhea" id="RHEA:42928"/>
        <dbReference type="Rhea" id="RHEA-COMP:10286"/>
        <dbReference type="Rhea" id="RHEA-COMP:10287"/>
        <dbReference type="ChEBI" id="CHEBI:15378"/>
        <dbReference type="ChEBI" id="CHEBI:57856"/>
        <dbReference type="ChEBI" id="CHEBI:59789"/>
        <dbReference type="ChEBI" id="CHEBI:74506"/>
        <dbReference type="ChEBI" id="CHEBI:82748"/>
        <dbReference type="EC" id="2.1.1.199"/>
    </reaction>
</comment>
<comment type="subcellular location">
    <subcellularLocation>
        <location evidence="1">Cytoplasm</location>
    </subcellularLocation>
</comment>
<comment type="similarity">
    <text evidence="1">Belongs to the methyltransferase superfamily. RsmH family.</text>
</comment>
<comment type="sequence caution" evidence="2">
    <conflict type="erroneous initiation">
        <sequence resource="EMBL-CDS" id="AAK46508"/>
    </conflict>
    <text>Truncated N-terminus.</text>
</comment>
<keyword id="KW-0963">Cytoplasm</keyword>
<keyword id="KW-0489">Methyltransferase</keyword>
<keyword id="KW-1185">Reference proteome</keyword>
<keyword id="KW-0698">rRNA processing</keyword>
<keyword id="KW-0949">S-adenosyl-L-methionine</keyword>
<keyword id="KW-0808">Transferase</keyword>
<protein>
    <recommendedName>
        <fullName evidence="1">Ribosomal RNA small subunit methyltransferase H</fullName>
        <ecNumber evidence="1">2.1.1.199</ecNumber>
    </recommendedName>
    <alternativeName>
        <fullName evidence="1">16S rRNA m(4)C1402 methyltransferase</fullName>
    </alternativeName>
    <alternativeName>
        <fullName evidence="1">rRNA (cytosine-N(4)-)-methyltransferase RsmH</fullName>
    </alternativeName>
</protein>
<organism>
    <name type="scientific">Mycobacterium tuberculosis (strain CDC 1551 / Oshkosh)</name>
    <dbReference type="NCBI Taxonomy" id="83331"/>
    <lineage>
        <taxon>Bacteria</taxon>
        <taxon>Bacillati</taxon>
        <taxon>Actinomycetota</taxon>
        <taxon>Actinomycetes</taxon>
        <taxon>Mycobacteriales</taxon>
        <taxon>Mycobacteriaceae</taxon>
        <taxon>Mycobacterium</taxon>
        <taxon>Mycobacterium tuberculosis complex</taxon>
    </lineage>
</organism>
<reference key="1">
    <citation type="journal article" date="2002" name="J. Bacteriol.">
        <title>Whole-genome comparison of Mycobacterium tuberculosis clinical and laboratory strains.</title>
        <authorList>
            <person name="Fleischmann R.D."/>
            <person name="Alland D."/>
            <person name="Eisen J.A."/>
            <person name="Carpenter L."/>
            <person name="White O."/>
            <person name="Peterson J.D."/>
            <person name="DeBoy R.T."/>
            <person name="Dodson R.J."/>
            <person name="Gwinn M.L."/>
            <person name="Haft D.H."/>
            <person name="Hickey E.K."/>
            <person name="Kolonay J.F."/>
            <person name="Nelson W.C."/>
            <person name="Umayam L.A."/>
            <person name="Ermolaeva M.D."/>
            <person name="Salzberg S.L."/>
            <person name="Delcher A."/>
            <person name="Utterback T.R."/>
            <person name="Weidman J.F."/>
            <person name="Khouri H.M."/>
            <person name="Gill J."/>
            <person name="Mikula A."/>
            <person name="Bishai W."/>
            <person name="Jacobs W.R. Jr."/>
            <person name="Venter J.C."/>
            <person name="Fraser C.M."/>
        </authorList>
    </citation>
    <scope>NUCLEOTIDE SEQUENCE [LARGE SCALE GENOMIC DNA]</scope>
    <source>
        <strain>CDC 1551 / Oshkosh</strain>
    </source>
</reference>
<evidence type="ECO:0000255" key="1">
    <source>
        <dbReference type="HAMAP-Rule" id="MF_01007"/>
    </source>
</evidence>
<evidence type="ECO:0000305" key="2"/>
<name>RSMH_MYCTO</name>
<dbReference type="EC" id="2.1.1.199" evidence="1"/>
<dbReference type="EMBL" id="AE000516">
    <property type="protein sequence ID" value="AAK46508.1"/>
    <property type="status" value="ALT_INIT"/>
    <property type="molecule type" value="Genomic_DNA"/>
</dbReference>
<dbReference type="PIR" id="A70581">
    <property type="entry name" value="A70581"/>
</dbReference>
<dbReference type="RefSeq" id="WP_003411221.1">
    <property type="nucleotide sequence ID" value="NZ_KK341227.1"/>
</dbReference>
<dbReference type="SMR" id="P9WJP0"/>
<dbReference type="KEGG" id="mtc:MT2223"/>
<dbReference type="PATRIC" id="fig|83331.31.peg.2397"/>
<dbReference type="HOGENOM" id="CLU_038422_0_0_11"/>
<dbReference type="Proteomes" id="UP000001020">
    <property type="component" value="Chromosome"/>
</dbReference>
<dbReference type="GO" id="GO:0005737">
    <property type="term" value="C:cytoplasm"/>
    <property type="evidence" value="ECO:0007669"/>
    <property type="project" value="UniProtKB-SubCell"/>
</dbReference>
<dbReference type="GO" id="GO:0071424">
    <property type="term" value="F:rRNA (cytosine-N4-)-methyltransferase activity"/>
    <property type="evidence" value="ECO:0007669"/>
    <property type="project" value="UniProtKB-UniRule"/>
</dbReference>
<dbReference type="GO" id="GO:0070475">
    <property type="term" value="P:rRNA base methylation"/>
    <property type="evidence" value="ECO:0007669"/>
    <property type="project" value="UniProtKB-UniRule"/>
</dbReference>
<dbReference type="FunFam" id="1.10.150.170:FF:000001">
    <property type="entry name" value="Ribosomal RNA small subunit methyltransferase H"/>
    <property type="match status" value="1"/>
</dbReference>
<dbReference type="Gene3D" id="1.10.150.170">
    <property type="entry name" value="Putative methyltransferase TM0872, insert domain"/>
    <property type="match status" value="1"/>
</dbReference>
<dbReference type="Gene3D" id="3.40.50.150">
    <property type="entry name" value="Vaccinia Virus protein VP39"/>
    <property type="match status" value="1"/>
</dbReference>
<dbReference type="HAMAP" id="MF_01007">
    <property type="entry name" value="16SrRNA_methyltr_H"/>
    <property type="match status" value="1"/>
</dbReference>
<dbReference type="InterPro" id="IPR002903">
    <property type="entry name" value="RsmH"/>
</dbReference>
<dbReference type="InterPro" id="IPR023397">
    <property type="entry name" value="SAM-dep_MeTrfase_MraW_recog"/>
</dbReference>
<dbReference type="InterPro" id="IPR029063">
    <property type="entry name" value="SAM-dependent_MTases_sf"/>
</dbReference>
<dbReference type="NCBIfam" id="TIGR00006">
    <property type="entry name" value="16S rRNA (cytosine(1402)-N(4))-methyltransferase RsmH"/>
    <property type="match status" value="1"/>
</dbReference>
<dbReference type="PANTHER" id="PTHR11265:SF0">
    <property type="entry name" value="12S RRNA N4-METHYLCYTIDINE METHYLTRANSFERASE"/>
    <property type="match status" value="1"/>
</dbReference>
<dbReference type="PANTHER" id="PTHR11265">
    <property type="entry name" value="S-ADENOSYL-METHYLTRANSFERASE MRAW"/>
    <property type="match status" value="1"/>
</dbReference>
<dbReference type="Pfam" id="PF01795">
    <property type="entry name" value="Methyltransf_5"/>
    <property type="match status" value="1"/>
</dbReference>
<dbReference type="SUPFAM" id="SSF81799">
    <property type="entry name" value="Putative methyltransferase TM0872, insert domain"/>
    <property type="match status" value="1"/>
</dbReference>
<dbReference type="SUPFAM" id="SSF53335">
    <property type="entry name" value="S-adenosyl-L-methionine-dependent methyltransferases"/>
    <property type="match status" value="1"/>
</dbReference>
<accession>P9WJP0</accession>
<accession>L0TBI2</accession>
<accession>O06212</accession>
<accession>P65429</accession>
<proteinExistence type="inferred from homology"/>
<gene>
    <name evidence="1" type="primary">rsmH</name>
    <name type="synonym">mraW</name>
    <name type="ordered locus">MT2223</name>
</gene>
<feature type="chain" id="PRO_0000427795" description="Ribosomal RNA small subunit methyltransferase H">
    <location>
        <begin position="1"/>
        <end position="396"/>
    </location>
</feature>
<feature type="binding site" evidence="1">
    <location>
        <begin position="101"/>
        <end position="103"/>
    </location>
    <ligand>
        <name>S-adenosyl-L-methionine</name>
        <dbReference type="ChEBI" id="CHEBI:59789"/>
    </ligand>
</feature>
<feature type="binding site" evidence="1">
    <location>
        <position position="120"/>
    </location>
    <ligand>
        <name>S-adenosyl-L-methionine</name>
        <dbReference type="ChEBI" id="CHEBI:59789"/>
    </ligand>
</feature>
<feature type="binding site" evidence="1">
    <location>
        <position position="147"/>
    </location>
    <ligand>
        <name>S-adenosyl-L-methionine</name>
        <dbReference type="ChEBI" id="CHEBI:59789"/>
    </ligand>
</feature>
<feature type="binding site" evidence="1">
    <location>
        <position position="171"/>
    </location>
    <ligand>
        <name>S-adenosyl-L-methionine</name>
        <dbReference type="ChEBI" id="CHEBI:59789"/>
    </ligand>
</feature>
<feature type="binding site" evidence="1">
    <location>
        <position position="178"/>
    </location>
    <ligand>
        <name>S-adenosyl-L-methionine</name>
        <dbReference type="ChEBI" id="CHEBI:59789"/>
    </ligand>
</feature>
<sequence length="396" mass="42529">MQTRAPWSLPEATLAYFPNARFVSSDRDLGAGAAPGIAASRSTACQTWGGITVADPGSGPTGFGHVPVLAQRCFELLTPALTRYYPDGSQAVLLDATIGAGGHAERFLEGLPGLRLIGLDRDPTALDVARSRLVRFADRLTLVHTRYDCLGAALAESGYAAVGSVDGILFDLGVSSMQLDRAERGFAYATDAPLDMRMDPTTPLTAADIVNTYDEAALADILRRYGEERFARRIAAGIVRRRAKTPFTSTAELVALLYQAIPAPARRVGGHPAKRTFQALRIAVNDELESLRTAVPAALDALAIGGRIAVLAYQSLEDRIVKRVFAEAVASATPAGLPVELPGHEPRFRSLTHGAERASVAEIERNPRSTPVRLRALQRVEHRAQSQQWATEKGDS</sequence>